<comment type="function">
    <text evidence="6 7">Involved in repair of UV radiation-induced DNA damage during spore germination. Can repair thymine dimer 5-thyminyl-5,6-dihydrothymine (known as spore photoproduct (SP)) by in situ monomerization of SP to two thymines.</text>
</comment>
<comment type="catalytic activity">
    <reaction evidence="3 5 6 7">
        <text>(5R)-5,6-dihydro-5-(thymidin-7-yl)thymidine in DNA = a thymidine dimer in DNA</text>
        <dbReference type="Rhea" id="RHEA:56132"/>
        <dbReference type="Rhea" id="RHEA-COMP:14387"/>
        <dbReference type="Rhea" id="RHEA-COMP:14449"/>
        <dbReference type="ChEBI" id="CHEBI:139518"/>
        <dbReference type="ChEBI" id="CHEBI:139519"/>
        <dbReference type="EC" id="4.1.99.14"/>
    </reaction>
</comment>
<comment type="cofactor">
    <cofactor>
        <name>[4Fe-4S] cluster</name>
        <dbReference type="ChEBI" id="CHEBI:49883"/>
    </cofactor>
    <text>Binds 1 [4Fe-4S] cluster per subunit. The cluster is coordinated with 3 cysteines and an exchangeable S-adenosyl-L-methionine.</text>
</comment>
<comment type="cofactor">
    <cofactor>
        <name>S-adenosyl-L-methionine</name>
        <dbReference type="ChEBI" id="CHEBI:59789"/>
    </cofactor>
    <text>Binds 1 S-adenosyl-L-methionine per subunit.</text>
</comment>
<comment type="biophysicochemical properties">
    <kinetics>
        <KM evidence="6">6 uM for SPTpT</KM>
        <text>SPTpT is the spore photoproduct of the TpT dinucleoside.</text>
    </kinetics>
</comment>
<comment type="subunit">
    <text evidence="3 6 7">Monomer or homodimer.</text>
</comment>
<comment type="developmental stage">
    <text evidence="9">Expressed at stage III of sporulation in the forespore compartment of the developing sporangium.</text>
</comment>
<comment type="similarity">
    <text evidence="10">Belongs to the radical SAM superfamily. SPL family.</text>
</comment>
<feature type="chain" id="PRO_0000085124" description="Spore photoproduct lyase">
    <location>
        <begin position="1"/>
        <end position="342"/>
    </location>
</feature>
<feature type="domain" description="Radical SAM core" evidence="2">
    <location>
        <begin position="77"/>
        <end position="305"/>
    </location>
</feature>
<feature type="DNA-binding region" description="H-T-H motif" evidence="1">
    <location>
        <begin position="218"/>
        <end position="235"/>
    </location>
</feature>
<feature type="binding site">
    <location>
        <position position="91"/>
    </location>
    <ligand>
        <name>[4Fe-4S] cluster</name>
        <dbReference type="ChEBI" id="CHEBI:49883"/>
        <note>4Fe-4S-S-AdoMet</note>
    </ligand>
</feature>
<feature type="binding site">
    <location>
        <position position="95"/>
    </location>
    <ligand>
        <name>[4Fe-4S] cluster</name>
        <dbReference type="ChEBI" id="CHEBI:49883"/>
        <note>4Fe-4S-S-AdoMet</note>
    </ligand>
</feature>
<feature type="binding site">
    <location>
        <position position="98"/>
    </location>
    <ligand>
        <name>[4Fe-4S] cluster</name>
        <dbReference type="ChEBI" id="CHEBI:49883"/>
        <note>4Fe-4S-S-AdoMet</note>
    </ligand>
</feature>
<feature type="mutagenesis site" description="No activity. No iron-sulfur cluster formed." evidence="4">
    <original>C</original>
    <variation>A</variation>
    <location>
        <position position="91"/>
    </location>
</feature>
<feature type="mutagenesis site" description="No activity. No iron-sulfur cluster formed." evidence="4">
    <original>C</original>
    <variation>A</variation>
    <location>
        <position position="95"/>
    </location>
</feature>
<feature type="mutagenesis site" description="No activity. No iron-sulfur cluster formed." evidence="4">
    <original>C</original>
    <variation>A</variation>
    <location>
        <position position="98"/>
    </location>
</feature>
<feature type="mutagenesis site" description="Performs first half of the reaction. No effect on iron-sulfur cluster formation." evidence="4 8">
    <original>C</original>
    <variation>A</variation>
    <location>
        <position position="141"/>
    </location>
</feature>
<dbReference type="EC" id="4.1.99.14"/>
<dbReference type="EMBL" id="L08809">
    <property type="protein sequence ID" value="AAA22416.1"/>
    <property type="molecule type" value="Genomic_DNA"/>
</dbReference>
<dbReference type="EMBL" id="AL009126">
    <property type="protein sequence ID" value="CAB13266.1"/>
    <property type="molecule type" value="Genomic_DNA"/>
</dbReference>
<dbReference type="EMBL" id="X97385">
    <property type="protein sequence ID" value="CAA66050.1"/>
    <property type="molecule type" value="Genomic_DNA"/>
</dbReference>
<dbReference type="PIR" id="C47084">
    <property type="entry name" value="C47084"/>
</dbReference>
<dbReference type="RefSeq" id="NP_389276.1">
    <property type="nucleotide sequence ID" value="NC_000964.3"/>
</dbReference>
<dbReference type="RefSeq" id="WP_003245173.1">
    <property type="nucleotide sequence ID" value="NZ_OZ025638.1"/>
</dbReference>
<dbReference type="SMR" id="P37956"/>
<dbReference type="FunCoup" id="P37956">
    <property type="interactions" value="25"/>
</dbReference>
<dbReference type="STRING" id="224308.BSU13930"/>
<dbReference type="PaxDb" id="224308-BSU13930"/>
<dbReference type="DNASU" id="939248"/>
<dbReference type="EnsemblBacteria" id="CAB13266">
    <property type="protein sequence ID" value="CAB13266"/>
    <property type="gene ID" value="BSU_13930"/>
</dbReference>
<dbReference type="GeneID" id="939248"/>
<dbReference type="KEGG" id="bsu:BSU13930"/>
<dbReference type="PATRIC" id="fig|224308.179.peg.1519"/>
<dbReference type="eggNOG" id="COG1533">
    <property type="taxonomic scope" value="Bacteria"/>
</dbReference>
<dbReference type="InParanoid" id="P37956"/>
<dbReference type="OrthoDB" id="9787095at2"/>
<dbReference type="PhylomeDB" id="P37956"/>
<dbReference type="BioCyc" id="BSUB:BSU13930-MONOMER"/>
<dbReference type="BioCyc" id="MetaCyc:MONOMER-15020"/>
<dbReference type="BRENDA" id="4.1.99.14">
    <property type="organism ID" value="658"/>
</dbReference>
<dbReference type="SABIO-RK" id="P37956"/>
<dbReference type="Proteomes" id="UP000001570">
    <property type="component" value="Chromosome"/>
</dbReference>
<dbReference type="GO" id="GO:0042601">
    <property type="term" value="C:endospore-forming forespore"/>
    <property type="evidence" value="ECO:0000314"/>
    <property type="project" value="UniProtKB"/>
</dbReference>
<dbReference type="GO" id="GO:0051539">
    <property type="term" value="F:4 iron, 4 sulfur cluster binding"/>
    <property type="evidence" value="ECO:0000314"/>
    <property type="project" value="UniProtKB"/>
</dbReference>
<dbReference type="GO" id="GO:0003677">
    <property type="term" value="F:DNA binding"/>
    <property type="evidence" value="ECO:0007669"/>
    <property type="project" value="UniProtKB-KW"/>
</dbReference>
<dbReference type="GO" id="GO:0003913">
    <property type="term" value="F:DNA photolyase activity"/>
    <property type="evidence" value="ECO:0000314"/>
    <property type="project" value="UniProtKB"/>
</dbReference>
<dbReference type="GO" id="GO:0051536">
    <property type="term" value="F:iron-sulfur cluster binding"/>
    <property type="evidence" value="ECO:0000314"/>
    <property type="project" value="UniProtKB"/>
</dbReference>
<dbReference type="GO" id="GO:0046872">
    <property type="term" value="F:metal ion binding"/>
    <property type="evidence" value="ECO:0000314"/>
    <property type="project" value="UniProtKB"/>
</dbReference>
<dbReference type="GO" id="GO:1904047">
    <property type="term" value="F:S-adenosyl-L-methionine binding"/>
    <property type="evidence" value="ECO:0000314"/>
    <property type="project" value="UniProtKB"/>
</dbReference>
<dbReference type="GO" id="GO:0006281">
    <property type="term" value="P:DNA repair"/>
    <property type="evidence" value="ECO:0007669"/>
    <property type="project" value="UniProtKB-KW"/>
</dbReference>
<dbReference type="GO" id="GO:0030435">
    <property type="term" value="P:sporulation resulting in formation of a cellular spore"/>
    <property type="evidence" value="ECO:0007669"/>
    <property type="project" value="UniProtKB-KW"/>
</dbReference>
<dbReference type="CDD" id="cd01335">
    <property type="entry name" value="Radical_SAM"/>
    <property type="match status" value="1"/>
</dbReference>
<dbReference type="FunFam" id="3.40.50.12110:FF:000001">
    <property type="entry name" value="Spore photoproduct lyase"/>
    <property type="match status" value="1"/>
</dbReference>
<dbReference type="FunFam" id="3.80.30.30:FF:000001">
    <property type="entry name" value="Spore photoproduct lyase"/>
    <property type="match status" value="1"/>
</dbReference>
<dbReference type="Gene3D" id="3.40.50.12110">
    <property type="match status" value="1"/>
</dbReference>
<dbReference type="Gene3D" id="3.80.30.30">
    <property type="match status" value="1"/>
</dbReference>
<dbReference type="InterPro" id="IPR007197">
    <property type="entry name" value="rSAM"/>
</dbReference>
<dbReference type="InterPro" id="IPR049539">
    <property type="entry name" value="SPL"/>
</dbReference>
<dbReference type="InterPro" id="IPR034560">
    <property type="entry name" value="SPL_Bacilli"/>
</dbReference>
<dbReference type="InterPro" id="IPR023897">
    <property type="entry name" value="SPL_firmicutes"/>
</dbReference>
<dbReference type="NCBIfam" id="TIGR04070">
    <property type="entry name" value="photo_TT_lyase"/>
    <property type="match status" value="1"/>
</dbReference>
<dbReference type="PANTHER" id="PTHR37822:SF2">
    <property type="entry name" value="SPORE PHOTOPRODUCT LYASE"/>
    <property type="match status" value="1"/>
</dbReference>
<dbReference type="PANTHER" id="PTHR37822">
    <property type="entry name" value="SPORE PHOTOPRODUCT LYASE-RELATED"/>
    <property type="match status" value="1"/>
</dbReference>
<dbReference type="Pfam" id="PF20903">
    <property type="entry name" value="SPL"/>
    <property type="match status" value="1"/>
</dbReference>
<dbReference type="SFLD" id="SFLDS00029">
    <property type="entry name" value="Radical_SAM"/>
    <property type="match status" value="1"/>
</dbReference>
<dbReference type="SFLD" id="SFLDF00292">
    <property type="entry name" value="spore_photoproduct_lyase_1"/>
    <property type="match status" value="1"/>
</dbReference>
<dbReference type="SUPFAM" id="SSF102114">
    <property type="entry name" value="Radical SAM enzymes"/>
    <property type="match status" value="1"/>
</dbReference>
<dbReference type="PROSITE" id="PS51918">
    <property type="entry name" value="RADICAL_SAM"/>
    <property type="match status" value="1"/>
</dbReference>
<sequence>MQNPFVPQLVYIEPRALEYPLGQELQDKFENMGIEIRETTSHNQVRNIPGKNHLQQYRNAKSTLVIGVRKTLKFDSSKPSAEYAIPFATGCMGHCHYCYLQTTMGSKPYIRTYVNVEEILDQADKYMKERAPEFTRFEASCTSDIVGIDHLTHTLKRAIEHFGQSDLGKLRFVTKFHHVDHLLDAKHNGKTRFRFSINADYVIKNFEPGTSPLDKRIEAAVKVAKAGYPLGFIVAPIYIHEGWEEGYRHLFEKLDAALPQDVRHDITFELIQHRFTKPAKRVIEKNYPKTKLELDEEKRRYKWGRYGIGKYIYQKDEEHALREALESYIDTFFPNAKIEYFT</sequence>
<organism>
    <name type="scientific">Bacillus subtilis (strain 168)</name>
    <dbReference type="NCBI Taxonomy" id="224308"/>
    <lineage>
        <taxon>Bacteria</taxon>
        <taxon>Bacillati</taxon>
        <taxon>Bacillota</taxon>
        <taxon>Bacilli</taxon>
        <taxon>Bacillales</taxon>
        <taxon>Bacillaceae</taxon>
        <taxon>Bacillus</taxon>
    </lineage>
</organism>
<reference key="1">
    <citation type="journal article" date="1993" name="J. Bacteriol.">
        <title>Molecular cloning and characterization of the Bacillus subtilis spore photoproduct lyase (spl) gene, which is involved in repair of UV radiation-induced DNA damage during spore germination.</title>
        <authorList>
            <person name="Fajardo-Cavazos P."/>
            <person name="Salazar C."/>
            <person name="Nicholson W.L."/>
        </authorList>
    </citation>
    <scope>NUCLEOTIDE SEQUENCE [GENOMIC DNA]</scope>
    <source>
        <strain>168</strain>
    </source>
</reference>
<reference key="2">
    <citation type="journal article" date="1997" name="Nature">
        <title>The complete genome sequence of the Gram-positive bacterium Bacillus subtilis.</title>
        <authorList>
            <person name="Kunst F."/>
            <person name="Ogasawara N."/>
            <person name="Moszer I."/>
            <person name="Albertini A.M."/>
            <person name="Alloni G."/>
            <person name="Azevedo V."/>
            <person name="Bertero M.G."/>
            <person name="Bessieres P."/>
            <person name="Bolotin A."/>
            <person name="Borchert S."/>
            <person name="Borriss R."/>
            <person name="Boursier L."/>
            <person name="Brans A."/>
            <person name="Braun M."/>
            <person name="Brignell S.C."/>
            <person name="Bron S."/>
            <person name="Brouillet S."/>
            <person name="Bruschi C.V."/>
            <person name="Caldwell B."/>
            <person name="Capuano V."/>
            <person name="Carter N.M."/>
            <person name="Choi S.-K."/>
            <person name="Codani J.-J."/>
            <person name="Connerton I.F."/>
            <person name="Cummings N.J."/>
            <person name="Daniel R.A."/>
            <person name="Denizot F."/>
            <person name="Devine K.M."/>
            <person name="Duesterhoeft A."/>
            <person name="Ehrlich S.D."/>
            <person name="Emmerson P.T."/>
            <person name="Entian K.-D."/>
            <person name="Errington J."/>
            <person name="Fabret C."/>
            <person name="Ferrari E."/>
            <person name="Foulger D."/>
            <person name="Fritz C."/>
            <person name="Fujita M."/>
            <person name="Fujita Y."/>
            <person name="Fuma S."/>
            <person name="Galizzi A."/>
            <person name="Galleron N."/>
            <person name="Ghim S.-Y."/>
            <person name="Glaser P."/>
            <person name="Goffeau A."/>
            <person name="Golightly E.J."/>
            <person name="Grandi G."/>
            <person name="Guiseppi G."/>
            <person name="Guy B.J."/>
            <person name="Haga K."/>
            <person name="Haiech J."/>
            <person name="Harwood C.R."/>
            <person name="Henaut A."/>
            <person name="Hilbert H."/>
            <person name="Holsappel S."/>
            <person name="Hosono S."/>
            <person name="Hullo M.-F."/>
            <person name="Itaya M."/>
            <person name="Jones L.-M."/>
            <person name="Joris B."/>
            <person name="Karamata D."/>
            <person name="Kasahara Y."/>
            <person name="Klaerr-Blanchard M."/>
            <person name="Klein C."/>
            <person name="Kobayashi Y."/>
            <person name="Koetter P."/>
            <person name="Koningstein G."/>
            <person name="Krogh S."/>
            <person name="Kumano M."/>
            <person name="Kurita K."/>
            <person name="Lapidus A."/>
            <person name="Lardinois S."/>
            <person name="Lauber J."/>
            <person name="Lazarevic V."/>
            <person name="Lee S.-M."/>
            <person name="Levine A."/>
            <person name="Liu H."/>
            <person name="Masuda S."/>
            <person name="Mauel C."/>
            <person name="Medigue C."/>
            <person name="Medina N."/>
            <person name="Mellado R.P."/>
            <person name="Mizuno M."/>
            <person name="Moestl D."/>
            <person name="Nakai S."/>
            <person name="Noback M."/>
            <person name="Noone D."/>
            <person name="O'Reilly M."/>
            <person name="Ogawa K."/>
            <person name="Ogiwara A."/>
            <person name="Oudega B."/>
            <person name="Park S.-H."/>
            <person name="Parro V."/>
            <person name="Pohl T.M."/>
            <person name="Portetelle D."/>
            <person name="Porwollik S."/>
            <person name="Prescott A.M."/>
            <person name="Presecan E."/>
            <person name="Pujic P."/>
            <person name="Purnelle B."/>
            <person name="Rapoport G."/>
            <person name="Rey M."/>
            <person name="Reynolds S."/>
            <person name="Rieger M."/>
            <person name="Rivolta C."/>
            <person name="Rocha E."/>
            <person name="Roche B."/>
            <person name="Rose M."/>
            <person name="Sadaie Y."/>
            <person name="Sato T."/>
            <person name="Scanlan E."/>
            <person name="Schleich S."/>
            <person name="Schroeter R."/>
            <person name="Scoffone F."/>
            <person name="Sekiguchi J."/>
            <person name="Sekowska A."/>
            <person name="Seror S.J."/>
            <person name="Serror P."/>
            <person name="Shin B.-S."/>
            <person name="Soldo B."/>
            <person name="Sorokin A."/>
            <person name="Tacconi E."/>
            <person name="Takagi T."/>
            <person name="Takahashi H."/>
            <person name="Takemaru K."/>
            <person name="Takeuchi M."/>
            <person name="Tamakoshi A."/>
            <person name="Tanaka T."/>
            <person name="Terpstra P."/>
            <person name="Tognoni A."/>
            <person name="Tosato V."/>
            <person name="Uchiyama S."/>
            <person name="Vandenbol M."/>
            <person name="Vannier F."/>
            <person name="Vassarotti A."/>
            <person name="Viari A."/>
            <person name="Wambutt R."/>
            <person name="Wedler E."/>
            <person name="Wedler H."/>
            <person name="Weitzenegger T."/>
            <person name="Winters P."/>
            <person name="Wipat A."/>
            <person name="Yamamoto H."/>
            <person name="Yamane K."/>
            <person name="Yasumoto K."/>
            <person name="Yata K."/>
            <person name="Yoshida K."/>
            <person name="Yoshikawa H.-F."/>
            <person name="Zumstein E."/>
            <person name="Yoshikawa H."/>
            <person name="Danchin A."/>
        </authorList>
    </citation>
    <scope>NUCLEOTIDE SEQUENCE [LARGE SCALE GENOMIC DNA]</scope>
    <source>
        <strain>168</strain>
    </source>
</reference>
<reference key="3">
    <citation type="journal article" date="1997" name="Microbiology">
        <title>Functional and genetic characterization of mcpC, which encodes a third methyl-accepting chemotaxis protein in Bacillus subtilis.</title>
        <authorList>
            <person name="Mueller J."/>
            <person name="Schiel S."/>
            <person name="Ordal G.W."/>
            <person name="Saxild H.H."/>
        </authorList>
    </citation>
    <scope>NUCLEOTIDE SEQUENCE [GENOMIC DNA] OF 319-342</scope>
    <source>
        <strain>168</strain>
    </source>
</reference>
<reference key="4">
    <citation type="journal article" date="1994" name="J. Bacteriol.">
        <title>Temporal regulation and forespore-specific expression of the spore photoproduct lyase gene by sigma-G RNA polymerase during Bacillus subtilis sporulation.</title>
        <authorList>
            <person name="Pedraza-Reyes M."/>
            <person name="Gutierrez-Corona F."/>
            <person name="Nicholson W.L."/>
        </authorList>
    </citation>
    <scope>DEVELOPMENTAL STAGE</scope>
    <source>
        <strain>168</strain>
    </source>
</reference>
<reference key="5">
    <citation type="journal article" date="2001" name="Proc. Natl. Acad. Sci. U.S.A.">
        <title>The subunit structure and catalytic mechanism of the Bacillus subtilis DNA repair enzyme spore photoproduct lyase.</title>
        <authorList>
            <person name="Rebeil R."/>
            <person name="Nicholson W.L."/>
        </authorList>
    </citation>
    <scope>CATALYTIC ACTIVITY</scope>
    <scope>COFACTOR</scope>
    <scope>SUBUNIT</scope>
    <source>
        <strain>168</strain>
    </source>
</reference>
<reference key="6">
    <citation type="journal article" date="2002" name="J. Am. Chem. Soc.">
        <title>Direct H atom abstraction from spore photoproduct C-6 initiates DNA repair in the reaction catalyzed by spore photoproduct lyase: evidence for a reversibly generated adenosyl radical intermediate.</title>
        <authorList>
            <person name="Cheek J."/>
            <person name="Broderick J.B."/>
        </authorList>
    </citation>
    <scope>REACTION MECHANISM</scope>
</reference>
<reference key="7">
    <citation type="journal article" date="2005" name="Curr. Microbiol.">
        <title>Essential cysteine residues in Bacillus subtilis spore photoproduct lyase identified by alanine scanning mutagenesis.</title>
        <authorList>
            <person name="Fajardo-Cavazos P."/>
            <person name="Rebeil R."/>
            <person name="Nicholson W.L."/>
        </authorList>
    </citation>
    <scope>MUTAGENESIS OF CYS-91; CYS-95; CYS-98 AND CYS-141</scope>
</reference>
<reference key="8">
    <citation type="journal article" date="2006" name="Chem. Commun. (Camb.)">
        <title>The spore photoproduct lyase repairs the 5S- and not the 5R-configured spore photoproduct DNA lesion.</title>
        <authorList>
            <person name="Friedel M.G."/>
            <person name="Berteau O."/>
            <person name="Pieck J.C."/>
            <person name="Atta M."/>
            <person name="Ollagnier-de-Choudens S."/>
            <person name="Fontecave M."/>
            <person name="Carell T."/>
        </authorList>
    </citation>
    <scope>CATALYTIC ACTIVITY</scope>
</reference>
<reference key="9">
    <citation type="journal article" date="2006" name="J. Biol. Chem.">
        <title>Characterization of an active spore photoproduct lyase, a DNA repair enzyme in the radical S-adenosylmethionine superfamily.</title>
        <authorList>
            <person name="Buis J.M."/>
            <person name="Cheek J."/>
            <person name="Kalliri E."/>
            <person name="Broderick J.B."/>
        </authorList>
    </citation>
    <scope>CATALYTIC ACTIVITY</scope>
    <scope>FUNCTION</scope>
    <scope>COFACTOR</scope>
    <scope>SUBUNIT</scope>
    <scope>REACTION MECHANISM</scope>
    <source>
        <strain>168 / JH624 / KI1152</strain>
    </source>
</reference>
<reference key="10">
    <citation type="journal article" date="2006" name="J. Biol. Chem.">
        <title>Dinucleotide spore photoproduct, a minimal substrate of the DNA repair spore photoproduct lyase enzyme from Bacillus subtilis.</title>
        <authorList>
            <person name="Chandor A."/>
            <person name="Berteau O."/>
            <person name="Douki T."/>
            <person name="Gasparutto D."/>
            <person name="Sanakis Y."/>
            <person name="Ollagnier-de-Choudens S."/>
            <person name="Atta M."/>
            <person name="Fontecave M."/>
        </authorList>
    </citation>
    <scope>CATALYTIC ACTIVITY</scope>
    <scope>FUNCTION</scope>
    <scope>COFACTOR</scope>
    <scope>SUBUNIT</scope>
    <scope>SUBSTRATE SPECIFICITY</scope>
    <scope>BIOPHYSICOCHEMICAL PROPERTIES</scope>
</reference>
<reference key="11">
    <citation type="journal article" date="2008" name="J. Biol. Chem.">
        <title>DNA repair and free radicals, new insights into the mechanism of spore photoproduct lyase revealed by single amino acid substitution.</title>
        <authorList>
            <person name="Chandor-Proust A."/>
            <person name="Berteau O."/>
            <person name="Douki T."/>
            <person name="Gasparutto D."/>
            <person name="Ollagnier-de-Choudens S."/>
            <person name="Fontecave M."/>
            <person name="Atta M."/>
        </authorList>
    </citation>
    <scope>MUTAGENESIS OF CYS-141</scope>
    <scope>REACTION MECHANISM</scope>
</reference>
<proteinExistence type="evidence at protein level"/>
<gene>
    <name type="primary">splB</name>
    <name type="synonym">spl</name>
    <name type="ordered locus">BSU13930</name>
</gene>
<name>SPL_BACSU</name>
<accession>P37956</accession>
<keyword id="KW-0004">4Fe-4S</keyword>
<keyword id="KW-0227">DNA damage</keyword>
<keyword id="KW-0234">DNA repair</keyword>
<keyword id="KW-0238">DNA-binding</keyword>
<keyword id="KW-0408">Iron</keyword>
<keyword id="KW-0411">Iron-sulfur</keyword>
<keyword id="KW-0456">Lyase</keyword>
<keyword id="KW-0479">Metal-binding</keyword>
<keyword id="KW-1185">Reference proteome</keyword>
<keyword id="KW-0949">S-adenosyl-L-methionine</keyword>
<keyword id="KW-0749">Sporulation</keyword>
<protein>
    <recommendedName>
        <fullName>Spore photoproduct lyase</fullName>
        <ecNumber>4.1.99.14</ecNumber>
    </recommendedName>
</protein>
<evidence type="ECO:0000255" key="1"/>
<evidence type="ECO:0000255" key="2">
    <source>
        <dbReference type="PROSITE-ProRule" id="PRU01266"/>
    </source>
</evidence>
<evidence type="ECO:0000269" key="3">
    <source>
    </source>
</evidence>
<evidence type="ECO:0000269" key="4">
    <source>
    </source>
</evidence>
<evidence type="ECO:0000269" key="5">
    <source>
    </source>
</evidence>
<evidence type="ECO:0000269" key="6">
    <source>
    </source>
</evidence>
<evidence type="ECO:0000269" key="7">
    <source>
    </source>
</evidence>
<evidence type="ECO:0000269" key="8">
    <source>
    </source>
</evidence>
<evidence type="ECO:0000269" key="9">
    <source>
    </source>
</evidence>
<evidence type="ECO:0000305" key="10"/>